<name>DAPF_ACIET</name>
<sequence length="292" mass="31002">MHIRFTKMQGAGNDFVVLDETQGRLGLTPAQYRFLADRHFGVGADQILTVRPSPGAGIDFEYVIHNADGGQVEQCGNGARCFARYVRDKGLTAQDTIRVQTMAGVIAPHLTADGRVTVDMGRPELEPARVPFDTTGLAPVSQGSGQKWPLALDGQASEATLLVAVVSMGNPHAVQLVDDVDTAPVAQTGPLIESHPRFPQRVNAGYLQIVNRGEVRLRVYERGAGETLACGTGACAAVVAGIRLGLLDARVQVHTRGGLLTIDWAGGLQDPVFMTGPATTVFEGEIDIPDAL</sequence>
<gene>
    <name evidence="1" type="primary">dapF</name>
    <name type="ordered locus">Dtpsy_2998</name>
</gene>
<organism>
    <name type="scientific">Acidovorax ebreus (strain TPSY)</name>
    <name type="common">Diaphorobacter sp. (strain TPSY)</name>
    <dbReference type="NCBI Taxonomy" id="535289"/>
    <lineage>
        <taxon>Bacteria</taxon>
        <taxon>Pseudomonadati</taxon>
        <taxon>Pseudomonadota</taxon>
        <taxon>Betaproteobacteria</taxon>
        <taxon>Burkholderiales</taxon>
        <taxon>Comamonadaceae</taxon>
        <taxon>Diaphorobacter</taxon>
    </lineage>
</organism>
<reference key="1">
    <citation type="submission" date="2009-01" db="EMBL/GenBank/DDBJ databases">
        <title>Complete sequence of Diaphorobacter sp. TPSY.</title>
        <authorList>
            <consortium name="US DOE Joint Genome Institute"/>
            <person name="Lucas S."/>
            <person name="Copeland A."/>
            <person name="Lapidus A."/>
            <person name="Glavina del Rio T."/>
            <person name="Tice H."/>
            <person name="Bruce D."/>
            <person name="Goodwin L."/>
            <person name="Pitluck S."/>
            <person name="Chertkov O."/>
            <person name="Brettin T."/>
            <person name="Detter J.C."/>
            <person name="Han C."/>
            <person name="Larimer F."/>
            <person name="Land M."/>
            <person name="Hauser L."/>
            <person name="Kyrpides N."/>
            <person name="Mikhailova N."/>
            <person name="Coates J.D."/>
        </authorList>
    </citation>
    <scope>NUCLEOTIDE SEQUENCE [LARGE SCALE GENOMIC DNA]</scope>
    <source>
        <strain>TPSY</strain>
    </source>
</reference>
<comment type="function">
    <text evidence="1">Catalyzes the stereoinversion of LL-2,6-diaminopimelate (L,L-DAP) to meso-diaminopimelate (meso-DAP), a precursor of L-lysine and an essential component of the bacterial peptidoglycan.</text>
</comment>
<comment type="catalytic activity">
    <reaction evidence="1">
        <text>(2S,6S)-2,6-diaminopimelate = meso-2,6-diaminopimelate</text>
        <dbReference type="Rhea" id="RHEA:15393"/>
        <dbReference type="ChEBI" id="CHEBI:57609"/>
        <dbReference type="ChEBI" id="CHEBI:57791"/>
        <dbReference type="EC" id="5.1.1.7"/>
    </reaction>
</comment>
<comment type="pathway">
    <text evidence="1">Amino-acid biosynthesis; L-lysine biosynthesis via DAP pathway; DL-2,6-diaminopimelate from LL-2,6-diaminopimelate: step 1/1.</text>
</comment>
<comment type="subunit">
    <text evidence="1">Homodimer.</text>
</comment>
<comment type="subcellular location">
    <subcellularLocation>
        <location evidence="1">Cytoplasm</location>
    </subcellularLocation>
</comment>
<comment type="similarity">
    <text evidence="1">Belongs to the diaminopimelate epimerase family.</text>
</comment>
<evidence type="ECO:0000255" key="1">
    <source>
        <dbReference type="HAMAP-Rule" id="MF_00197"/>
    </source>
</evidence>
<feature type="chain" id="PRO_1000124412" description="Diaminopimelate epimerase">
    <location>
        <begin position="1"/>
        <end position="292"/>
    </location>
</feature>
<feature type="active site" description="Proton donor" evidence="1">
    <location>
        <position position="75"/>
    </location>
</feature>
<feature type="active site" description="Proton acceptor" evidence="1">
    <location>
        <position position="230"/>
    </location>
</feature>
<feature type="binding site" evidence="1">
    <location>
        <position position="13"/>
    </location>
    <ligand>
        <name>substrate</name>
    </ligand>
</feature>
<feature type="binding site" evidence="1">
    <location>
        <position position="46"/>
    </location>
    <ligand>
        <name>substrate</name>
    </ligand>
</feature>
<feature type="binding site" evidence="1">
    <location>
        <position position="66"/>
    </location>
    <ligand>
        <name>substrate</name>
    </ligand>
</feature>
<feature type="binding site" evidence="1">
    <location>
        <begin position="76"/>
        <end position="77"/>
    </location>
    <ligand>
        <name>substrate</name>
    </ligand>
</feature>
<feature type="binding site" evidence="1">
    <location>
        <position position="170"/>
    </location>
    <ligand>
        <name>substrate</name>
    </ligand>
</feature>
<feature type="binding site" evidence="1">
    <location>
        <position position="203"/>
    </location>
    <ligand>
        <name>substrate</name>
    </ligand>
</feature>
<feature type="binding site" evidence="1">
    <location>
        <begin position="221"/>
        <end position="222"/>
    </location>
    <ligand>
        <name>substrate</name>
    </ligand>
</feature>
<feature type="binding site" evidence="1">
    <location>
        <begin position="231"/>
        <end position="232"/>
    </location>
    <ligand>
        <name>substrate</name>
    </ligand>
</feature>
<feature type="site" description="Could be important to modulate the pK values of the two catalytic cysteine residues" evidence="1">
    <location>
        <position position="172"/>
    </location>
</feature>
<feature type="site" description="Could be important to modulate the pK values of the two catalytic cysteine residues" evidence="1">
    <location>
        <position position="221"/>
    </location>
</feature>
<protein>
    <recommendedName>
        <fullName evidence="1">Diaminopimelate epimerase</fullName>
        <shortName evidence="1">DAP epimerase</shortName>
        <ecNumber evidence="1">5.1.1.7</ecNumber>
    </recommendedName>
    <alternativeName>
        <fullName evidence="1">PLP-independent amino acid racemase</fullName>
    </alternativeName>
</protein>
<keyword id="KW-0028">Amino-acid biosynthesis</keyword>
<keyword id="KW-0963">Cytoplasm</keyword>
<keyword id="KW-0413">Isomerase</keyword>
<keyword id="KW-0457">Lysine biosynthesis</keyword>
<keyword id="KW-1185">Reference proteome</keyword>
<dbReference type="EC" id="5.1.1.7" evidence="1"/>
<dbReference type="EMBL" id="CP001392">
    <property type="protein sequence ID" value="ACM34431.1"/>
    <property type="molecule type" value="Genomic_DNA"/>
</dbReference>
<dbReference type="RefSeq" id="WP_015914277.1">
    <property type="nucleotide sequence ID" value="NC_011992.1"/>
</dbReference>
<dbReference type="SMR" id="B9MFT0"/>
<dbReference type="KEGG" id="dia:Dtpsy_2998"/>
<dbReference type="eggNOG" id="COG0253">
    <property type="taxonomic scope" value="Bacteria"/>
</dbReference>
<dbReference type="HOGENOM" id="CLU_053306_1_1_4"/>
<dbReference type="UniPathway" id="UPA00034">
    <property type="reaction ID" value="UER00025"/>
</dbReference>
<dbReference type="Proteomes" id="UP000000450">
    <property type="component" value="Chromosome"/>
</dbReference>
<dbReference type="GO" id="GO:0005829">
    <property type="term" value="C:cytosol"/>
    <property type="evidence" value="ECO:0007669"/>
    <property type="project" value="TreeGrafter"/>
</dbReference>
<dbReference type="GO" id="GO:0008837">
    <property type="term" value="F:diaminopimelate epimerase activity"/>
    <property type="evidence" value="ECO:0007669"/>
    <property type="project" value="UniProtKB-UniRule"/>
</dbReference>
<dbReference type="GO" id="GO:0009089">
    <property type="term" value="P:lysine biosynthetic process via diaminopimelate"/>
    <property type="evidence" value="ECO:0007669"/>
    <property type="project" value="UniProtKB-UniRule"/>
</dbReference>
<dbReference type="FunFam" id="3.10.310.10:FF:000001">
    <property type="entry name" value="Diaminopimelate epimerase"/>
    <property type="match status" value="1"/>
</dbReference>
<dbReference type="Gene3D" id="3.10.310.10">
    <property type="entry name" value="Diaminopimelate Epimerase, Chain A, domain 1"/>
    <property type="match status" value="2"/>
</dbReference>
<dbReference type="HAMAP" id="MF_00197">
    <property type="entry name" value="DAP_epimerase"/>
    <property type="match status" value="1"/>
</dbReference>
<dbReference type="InterPro" id="IPR018510">
    <property type="entry name" value="DAP_epimerase_AS"/>
</dbReference>
<dbReference type="InterPro" id="IPR001653">
    <property type="entry name" value="DAP_epimerase_DapF"/>
</dbReference>
<dbReference type="NCBIfam" id="TIGR00652">
    <property type="entry name" value="DapF"/>
    <property type="match status" value="1"/>
</dbReference>
<dbReference type="PANTHER" id="PTHR31689:SF0">
    <property type="entry name" value="DIAMINOPIMELATE EPIMERASE"/>
    <property type="match status" value="1"/>
</dbReference>
<dbReference type="PANTHER" id="PTHR31689">
    <property type="entry name" value="DIAMINOPIMELATE EPIMERASE, CHLOROPLASTIC"/>
    <property type="match status" value="1"/>
</dbReference>
<dbReference type="Pfam" id="PF01678">
    <property type="entry name" value="DAP_epimerase"/>
    <property type="match status" value="2"/>
</dbReference>
<dbReference type="SUPFAM" id="SSF54506">
    <property type="entry name" value="Diaminopimelate epimerase-like"/>
    <property type="match status" value="2"/>
</dbReference>
<dbReference type="PROSITE" id="PS01326">
    <property type="entry name" value="DAP_EPIMERASE"/>
    <property type="match status" value="1"/>
</dbReference>
<proteinExistence type="inferred from homology"/>
<accession>B9MFT0</accession>